<name>CUDA_DICDI</name>
<evidence type="ECO:0000256" key="1">
    <source>
        <dbReference type="SAM" id="MobiDB-lite"/>
    </source>
</evidence>
<evidence type="ECO:0000269" key="2">
    <source>
    </source>
</evidence>
<evidence type="ECO:0000269" key="3">
    <source>
    </source>
</evidence>
<evidence type="ECO:0000269" key="4">
    <source>
    </source>
</evidence>
<evidence type="ECO:0000305" key="5"/>
<feature type="chain" id="PRO_0000079557" description="Putative transcriptional regulator cudA">
    <location>
        <begin position="1"/>
        <end position="802"/>
    </location>
</feature>
<feature type="region of interest" description="Disordered" evidence="1">
    <location>
        <begin position="1"/>
        <end position="148"/>
    </location>
</feature>
<feature type="region of interest" description="Disordered" evidence="1">
    <location>
        <begin position="154"/>
        <end position="173"/>
    </location>
</feature>
<feature type="region of interest" description="Disordered" evidence="1">
    <location>
        <begin position="381"/>
        <end position="446"/>
    </location>
</feature>
<feature type="region of interest" description="Disordered" evidence="1">
    <location>
        <begin position="636"/>
        <end position="658"/>
    </location>
</feature>
<feature type="compositionally biased region" description="Low complexity" evidence="1">
    <location>
        <begin position="25"/>
        <end position="63"/>
    </location>
</feature>
<feature type="compositionally biased region" description="Polar residues" evidence="1">
    <location>
        <begin position="69"/>
        <end position="88"/>
    </location>
</feature>
<feature type="compositionally biased region" description="Low complexity" evidence="1">
    <location>
        <begin position="89"/>
        <end position="128"/>
    </location>
</feature>
<feature type="compositionally biased region" description="Polar residues" evidence="1">
    <location>
        <begin position="129"/>
        <end position="142"/>
    </location>
</feature>
<feature type="compositionally biased region" description="Low complexity" evidence="1">
    <location>
        <begin position="381"/>
        <end position="445"/>
    </location>
</feature>
<feature type="sequence conflict" description="In Ref. 1; CAA73586." evidence="5" ref="1">
    <original>T</original>
    <variation>A</variation>
    <location>
        <position position="90"/>
    </location>
</feature>
<feature type="sequence conflict" description="In Ref. 1; CAA73586." evidence="5" ref="1">
    <original>N</original>
    <variation>S</variation>
    <location>
        <position position="99"/>
    </location>
</feature>
<feature type="sequence conflict" description="In Ref. 1; CAA73586." evidence="5" ref="1">
    <location>
        <position position="113"/>
    </location>
</feature>
<feature type="sequence conflict" description="In Ref. 1; CAA73586." evidence="5" ref="1">
    <original>N</original>
    <variation>T</variation>
    <location>
        <position position="447"/>
    </location>
</feature>
<feature type="sequence conflict" description="In Ref. 1; CAA73586." evidence="5" ref="1">
    <location>
        <begin position="671"/>
        <end position="676"/>
    </location>
</feature>
<feature type="sequence conflict" description="In Ref. 1; CAA73586." evidence="5" ref="1">
    <location>
        <begin position="754"/>
        <end position="757"/>
    </location>
</feature>
<reference key="1">
    <citation type="journal article" date="1997" name="Development">
        <title>CudA: a Dictyostelium gene with pleiotropic effects on cellular differentiation and slug behaviour.</title>
        <authorList>
            <person name="Fukuzawa M."/>
            <person name="Hopper N."/>
            <person name="Williams J."/>
        </authorList>
    </citation>
    <scope>NUCLEOTIDE SEQUENCE [MRNA]</scope>
    <scope>FUNCTION</scope>
    <scope>SUBCELLULAR LOCATION</scope>
    <scope>TISSUE SPECIFICITY</scope>
    <scope>DEVELOPMENTAL STAGE</scope>
    <scope>DISRUPTION PHENOTYPE</scope>
    <source>
        <strain>AX2</strain>
    </source>
</reference>
<reference key="2">
    <citation type="journal article" date="2005" name="Nature">
        <title>The genome of the social amoeba Dictyostelium discoideum.</title>
        <authorList>
            <person name="Eichinger L."/>
            <person name="Pachebat J.A."/>
            <person name="Gloeckner G."/>
            <person name="Rajandream M.A."/>
            <person name="Sucgang R."/>
            <person name="Berriman M."/>
            <person name="Song J."/>
            <person name="Olsen R."/>
            <person name="Szafranski K."/>
            <person name="Xu Q."/>
            <person name="Tunggal B."/>
            <person name="Kummerfeld S."/>
            <person name="Madera M."/>
            <person name="Konfortov B.A."/>
            <person name="Rivero F."/>
            <person name="Bankier A.T."/>
            <person name="Lehmann R."/>
            <person name="Hamlin N."/>
            <person name="Davies R."/>
            <person name="Gaudet P."/>
            <person name="Fey P."/>
            <person name="Pilcher K."/>
            <person name="Chen G."/>
            <person name="Saunders D."/>
            <person name="Sodergren E.J."/>
            <person name="Davis P."/>
            <person name="Kerhornou A."/>
            <person name="Nie X."/>
            <person name="Hall N."/>
            <person name="Anjard C."/>
            <person name="Hemphill L."/>
            <person name="Bason N."/>
            <person name="Farbrother P."/>
            <person name="Desany B."/>
            <person name="Just E."/>
            <person name="Morio T."/>
            <person name="Rost R."/>
            <person name="Churcher C.M."/>
            <person name="Cooper J."/>
            <person name="Haydock S."/>
            <person name="van Driessche N."/>
            <person name="Cronin A."/>
            <person name="Goodhead I."/>
            <person name="Muzny D.M."/>
            <person name="Mourier T."/>
            <person name="Pain A."/>
            <person name="Lu M."/>
            <person name="Harper D."/>
            <person name="Lindsay R."/>
            <person name="Hauser H."/>
            <person name="James K.D."/>
            <person name="Quiles M."/>
            <person name="Madan Babu M."/>
            <person name="Saito T."/>
            <person name="Buchrieser C."/>
            <person name="Wardroper A."/>
            <person name="Felder M."/>
            <person name="Thangavelu M."/>
            <person name="Johnson D."/>
            <person name="Knights A."/>
            <person name="Loulseged H."/>
            <person name="Mungall K.L."/>
            <person name="Oliver K."/>
            <person name="Price C."/>
            <person name="Quail M.A."/>
            <person name="Urushihara H."/>
            <person name="Hernandez J."/>
            <person name="Rabbinowitsch E."/>
            <person name="Steffen D."/>
            <person name="Sanders M."/>
            <person name="Ma J."/>
            <person name="Kohara Y."/>
            <person name="Sharp S."/>
            <person name="Simmonds M.N."/>
            <person name="Spiegler S."/>
            <person name="Tivey A."/>
            <person name="Sugano S."/>
            <person name="White B."/>
            <person name="Walker D."/>
            <person name="Woodward J.R."/>
            <person name="Winckler T."/>
            <person name="Tanaka Y."/>
            <person name="Shaulsky G."/>
            <person name="Schleicher M."/>
            <person name="Weinstock G.M."/>
            <person name="Rosenthal A."/>
            <person name="Cox E.C."/>
            <person name="Chisholm R.L."/>
            <person name="Gibbs R.A."/>
            <person name="Loomis W.F."/>
            <person name="Platzer M."/>
            <person name="Kay R.R."/>
            <person name="Williams J.G."/>
            <person name="Dear P.H."/>
            <person name="Noegel A.A."/>
            <person name="Barrell B.G."/>
            <person name="Kuspa A."/>
        </authorList>
    </citation>
    <scope>NUCLEOTIDE SEQUENCE [LARGE SCALE GENOMIC DNA]</scope>
    <source>
        <strain>AX4</strain>
    </source>
</reference>
<reference key="3">
    <citation type="journal article" date="2000" name="Development">
        <title>Analysis of the promoter of the cudA gene reveals novel mechanisms of Dictyostelium cell type differentiation.</title>
        <authorList>
            <person name="Fukuzawa M."/>
            <person name="Williams J.G."/>
        </authorList>
    </citation>
    <scope>INDUCTION BY DSTA</scope>
</reference>
<reference key="4">
    <citation type="journal article" date="2001" name="Dev. Biol.">
        <title>Adenylyl cyclase A expression is tip-specific in Dictyostelium slugs and directs StatA nuclear translocation and CudA gene expression.</title>
        <authorList>
            <person name="Verkerke-van Wijk I."/>
            <person name="Fukuzawa M."/>
            <person name="Devreotes P.N."/>
            <person name="Schaap P."/>
        </authorList>
    </citation>
    <scope>INDUCTION BY ACAA</scope>
</reference>
<accession>O00841</accession>
<accession>Q54PJ0</accession>
<gene>
    <name type="primary">cudA</name>
    <name type="ORF">DDB_G0284465</name>
</gene>
<keyword id="KW-0217">Developmental protein</keyword>
<keyword id="KW-0221">Differentiation</keyword>
<keyword id="KW-0238">DNA-binding</keyword>
<keyword id="KW-0539">Nucleus</keyword>
<keyword id="KW-1185">Reference proteome</keyword>
<keyword id="KW-0749">Sporulation</keyword>
<keyword id="KW-0804">Transcription</keyword>
<keyword id="KW-0805">Transcription regulation</keyword>
<sequence>MNQSQNFHNIDLGHYGAQGSNQSFNNNNNGNNGMMMNQQQMQQHVVPHLHHLQQQQQQPQQQQLRNVPDYSNSPNGTTNGSTMSPNCINTNNNNNNNNNNNNNSNNNNNNNNNASNNLTSNKSSSTNTPQIGQLQASPANLTNSPSAISSPITISNNSSLNSPSTTSSPNLLLNGTSNKRIMISQQTCLVEEKFSKNGVQKNVHVVVKNNPFLLTLSLLDSSLNFHQLTPEVQLVYDSESLKEVDSATVKPLEYKTRANEEGDQLTIELRIKVLSSQLEDMLFRAKVKIVDPRTRKETHGLSVITHPIRVVSKPDQVKKKAKKRKRAPTDSLMDTLNRIEHQQKEQQRLLKKLCYHDKENNIIQLIQQQQQQQQLLNNVTNNINNNNNINNNNNNNNNNNNNNNNNNNNNNNNNNNNNNNNTTSTTTTTTTTTSSCNNNNNNNNENNEHIVKIENTECNNNNNNIINNTENDENINKPILNSKDEFQSAFKEFIGAFKQLQCLDPDGADGAFKINTCANDAQTMCEILEMVKVELKKDENFKDKCGGSSGGACGENNPDNPCSCKVCPYKQKVDHINQSYETYFNMFNPSNSNSVVPQQSQQLQQQQIQQQQQSQQQVQQQQQQQMQQQPQQQQQQPQQQQQNQQQGQQPQQQQQQGQLDYTTYIDPQLQMQQQLQMQQAAQQQYMQQTMDQQQQQQYYMQQYHLQQQQQQQQAQRYLMQQQYMQQQAQQQQQQHQQVAIQQQQQQNQQQNQQQNQQQQNQSPQNQQSLDFQNANNFIDFNSGLGFMNFPNINFGDMGFSAV</sequence>
<dbReference type="EMBL" id="Y13119">
    <property type="protein sequence ID" value="CAA73586.1"/>
    <property type="molecule type" value="mRNA"/>
</dbReference>
<dbReference type="EMBL" id="AAFI02000066">
    <property type="protein sequence ID" value="EAL65159.1"/>
    <property type="molecule type" value="Genomic_DNA"/>
</dbReference>
<dbReference type="RefSeq" id="XP_638542.1">
    <property type="nucleotide sequence ID" value="XM_633450.1"/>
</dbReference>
<dbReference type="FunCoup" id="O00841">
    <property type="interactions" value="689"/>
</dbReference>
<dbReference type="STRING" id="44689.O00841"/>
<dbReference type="PaxDb" id="44689-DDB0191385"/>
<dbReference type="EnsemblProtists" id="EAL65159">
    <property type="protein sequence ID" value="EAL65159"/>
    <property type="gene ID" value="DDB_G0284465"/>
</dbReference>
<dbReference type="GeneID" id="8624635"/>
<dbReference type="KEGG" id="ddi:DDB_G0284465"/>
<dbReference type="dictyBase" id="DDB_G0284465">
    <property type="gene designation" value="cudA"/>
</dbReference>
<dbReference type="VEuPathDB" id="AmoebaDB:DDB_G0284465"/>
<dbReference type="eggNOG" id="ENOG502RBCU">
    <property type="taxonomic scope" value="Eukaryota"/>
</dbReference>
<dbReference type="HOGENOM" id="CLU_351064_0_0_1"/>
<dbReference type="InParanoid" id="O00841"/>
<dbReference type="OMA" id="INTCAND"/>
<dbReference type="PRO" id="PR:O00841"/>
<dbReference type="Proteomes" id="UP000002195">
    <property type="component" value="Chromosome 4"/>
</dbReference>
<dbReference type="GO" id="GO:0005654">
    <property type="term" value="C:nucleoplasm"/>
    <property type="evidence" value="ECO:0000314"/>
    <property type="project" value="UniProtKB"/>
</dbReference>
<dbReference type="GO" id="GO:0005634">
    <property type="term" value="C:nucleus"/>
    <property type="evidence" value="ECO:0000314"/>
    <property type="project" value="dictyBase"/>
</dbReference>
<dbReference type="GO" id="GO:0043565">
    <property type="term" value="F:sequence-specific DNA binding"/>
    <property type="evidence" value="ECO:0000314"/>
    <property type="project" value="dictyBase"/>
</dbReference>
<dbReference type="GO" id="GO:0030154">
    <property type="term" value="P:cell differentiation"/>
    <property type="evidence" value="ECO:0000315"/>
    <property type="project" value="dictyBase"/>
</dbReference>
<dbReference type="GO" id="GO:0097696">
    <property type="term" value="P:cell surface receptor signaling pathway via STAT"/>
    <property type="evidence" value="ECO:0000315"/>
    <property type="project" value="dictyBase"/>
</dbReference>
<dbReference type="GO" id="GO:0031154">
    <property type="term" value="P:culmination involved in sorocarp development"/>
    <property type="evidence" value="ECO:0000315"/>
    <property type="project" value="UniProtKB"/>
</dbReference>
<dbReference type="GO" id="GO:0010628">
    <property type="term" value="P:positive regulation of gene expression"/>
    <property type="evidence" value="ECO:0000315"/>
    <property type="project" value="dictyBase"/>
</dbReference>
<dbReference type="GO" id="GO:0030435">
    <property type="term" value="P:sporulation resulting in formation of a cellular spore"/>
    <property type="evidence" value="ECO:0000315"/>
    <property type="project" value="UniProtKB"/>
</dbReference>
<dbReference type="InterPro" id="IPR040430">
    <property type="entry name" value="CudA-like"/>
</dbReference>
<dbReference type="PANTHER" id="PTHR38092">
    <property type="entry name" value="REGULATOR CUDA, PUTATIVE-RELATED"/>
    <property type="match status" value="1"/>
</dbReference>
<dbReference type="PANTHER" id="PTHR38092:SF1">
    <property type="entry name" value="TRANSCRIPTIONAL REGULATOR CUDA-RELATED"/>
    <property type="match status" value="1"/>
</dbReference>
<comment type="function">
    <text evidence="4">Essential for normal culmination. May function as a transcriptional regulator.</text>
</comment>
<comment type="subcellular location">
    <subcellularLocation>
        <location evidence="4">Nucleus</location>
        <location evidence="4">Nucleoplasm</location>
    </subcellularLocation>
</comment>
<comment type="tissue specificity">
    <text evidence="4">Expressed in the prestalk cells that constitute the slug tip (pstA cells) and in prespore cells (at protein level). Not expressed in the band of prestalk cells that lies behind the slug tip (pstO cells). Highly expressed in pstO derived papilla cells during culmination.</text>
</comment>
<comment type="developmental stage">
    <text evidence="4">Accumulates during aggregation and remains constant throughout culmination.</text>
</comment>
<comment type="induction">
    <text evidence="2 3">Induced by acaA in the slug tip. Induced by dstA in prestalk cells, but not in prespore cells.</text>
</comment>
<comment type="disruption phenotype">
    <text evidence="4">Mutants fail to culminate. Development is normal until migratory slugs are formed, but slugs lacking cudA fail to culminate in the dark or in low level unidirectional light. In overhead light slugs lacking cudA eventually form defective fruiting bodies that lack both mature stalk cells and mature spore cells.</text>
</comment>
<organism>
    <name type="scientific">Dictyostelium discoideum</name>
    <name type="common">Social amoeba</name>
    <dbReference type="NCBI Taxonomy" id="44689"/>
    <lineage>
        <taxon>Eukaryota</taxon>
        <taxon>Amoebozoa</taxon>
        <taxon>Evosea</taxon>
        <taxon>Eumycetozoa</taxon>
        <taxon>Dictyostelia</taxon>
        <taxon>Dictyosteliales</taxon>
        <taxon>Dictyosteliaceae</taxon>
        <taxon>Dictyostelium</taxon>
    </lineage>
</organism>
<protein>
    <recommendedName>
        <fullName>Putative transcriptional regulator cudA</fullName>
    </recommendedName>
</protein>
<proteinExistence type="evidence at protein level"/>